<dbReference type="EC" id="6.3.4.5" evidence="1"/>
<dbReference type="EMBL" id="CP000236">
    <property type="protein sequence ID" value="ABD44955.1"/>
    <property type="molecule type" value="Genomic_DNA"/>
</dbReference>
<dbReference type="RefSeq" id="WP_011452756.1">
    <property type="nucleotide sequence ID" value="NC_007799.1"/>
</dbReference>
<dbReference type="SMR" id="Q2GGE6"/>
<dbReference type="STRING" id="205920.ECH_0680"/>
<dbReference type="KEGG" id="ech:ECH_0680"/>
<dbReference type="eggNOG" id="COG0137">
    <property type="taxonomic scope" value="Bacteria"/>
</dbReference>
<dbReference type="HOGENOM" id="CLU_032784_4_2_5"/>
<dbReference type="OrthoDB" id="9801641at2"/>
<dbReference type="UniPathway" id="UPA00068">
    <property type="reaction ID" value="UER00113"/>
</dbReference>
<dbReference type="Proteomes" id="UP000008320">
    <property type="component" value="Chromosome"/>
</dbReference>
<dbReference type="GO" id="GO:0005737">
    <property type="term" value="C:cytoplasm"/>
    <property type="evidence" value="ECO:0007669"/>
    <property type="project" value="UniProtKB-SubCell"/>
</dbReference>
<dbReference type="GO" id="GO:0004055">
    <property type="term" value="F:argininosuccinate synthase activity"/>
    <property type="evidence" value="ECO:0007669"/>
    <property type="project" value="UniProtKB-UniRule"/>
</dbReference>
<dbReference type="GO" id="GO:0005524">
    <property type="term" value="F:ATP binding"/>
    <property type="evidence" value="ECO:0007669"/>
    <property type="project" value="UniProtKB-UniRule"/>
</dbReference>
<dbReference type="GO" id="GO:0000053">
    <property type="term" value="P:argininosuccinate metabolic process"/>
    <property type="evidence" value="ECO:0007669"/>
    <property type="project" value="TreeGrafter"/>
</dbReference>
<dbReference type="GO" id="GO:0006526">
    <property type="term" value="P:L-arginine biosynthetic process"/>
    <property type="evidence" value="ECO:0007669"/>
    <property type="project" value="UniProtKB-UniRule"/>
</dbReference>
<dbReference type="GO" id="GO:0000050">
    <property type="term" value="P:urea cycle"/>
    <property type="evidence" value="ECO:0007669"/>
    <property type="project" value="TreeGrafter"/>
</dbReference>
<dbReference type="CDD" id="cd01999">
    <property type="entry name" value="ASS"/>
    <property type="match status" value="1"/>
</dbReference>
<dbReference type="FunFam" id="3.40.50.620:FF:000019">
    <property type="entry name" value="Argininosuccinate synthase"/>
    <property type="match status" value="1"/>
</dbReference>
<dbReference type="FunFam" id="3.90.1260.10:FF:000007">
    <property type="entry name" value="Argininosuccinate synthase"/>
    <property type="match status" value="1"/>
</dbReference>
<dbReference type="Gene3D" id="3.90.1260.10">
    <property type="entry name" value="Argininosuccinate synthetase, chain A, domain 2"/>
    <property type="match status" value="1"/>
</dbReference>
<dbReference type="Gene3D" id="3.40.50.620">
    <property type="entry name" value="HUPs"/>
    <property type="match status" value="1"/>
</dbReference>
<dbReference type="Gene3D" id="1.20.5.470">
    <property type="entry name" value="Single helix bin"/>
    <property type="match status" value="1"/>
</dbReference>
<dbReference type="HAMAP" id="MF_00005">
    <property type="entry name" value="Arg_succ_synth_type1"/>
    <property type="match status" value="1"/>
</dbReference>
<dbReference type="InterPro" id="IPR048268">
    <property type="entry name" value="Arginosuc_syn_C"/>
</dbReference>
<dbReference type="InterPro" id="IPR048267">
    <property type="entry name" value="Arginosuc_syn_N"/>
</dbReference>
<dbReference type="InterPro" id="IPR001518">
    <property type="entry name" value="Arginosuc_synth"/>
</dbReference>
<dbReference type="InterPro" id="IPR018223">
    <property type="entry name" value="Arginosuc_synth_CS"/>
</dbReference>
<dbReference type="InterPro" id="IPR023434">
    <property type="entry name" value="Arginosuc_synth_type_1_subfam"/>
</dbReference>
<dbReference type="InterPro" id="IPR024074">
    <property type="entry name" value="AS_cat/multimer_dom_body"/>
</dbReference>
<dbReference type="InterPro" id="IPR014729">
    <property type="entry name" value="Rossmann-like_a/b/a_fold"/>
</dbReference>
<dbReference type="NCBIfam" id="TIGR00032">
    <property type="entry name" value="argG"/>
    <property type="match status" value="1"/>
</dbReference>
<dbReference type="NCBIfam" id="NF001770">
    <property type="entry name" value="PRK00509.1"/>
    <property type="match status" value="1"/>
</dbReference>
<dbReference type="PANTHER" id="PTHR11587">
    <property type="entry name" value="ARGININOSUCCINATE SYNTHASE"/>
    <property type="match status" value="1"/>
</dbReference>
<dbReference type="PANTHER" id="PTHR11587:SF2">
    <property type="entry name" value="ARGININOSUCCINATE SYNTHASE"/>
    <property type="match status" value="1"/>
</dbReference>
<dbReference type="Pfam" id="PF20979">
    <property type="entry name" value="Arginosuc_syn_C"/>
    <property type="match status" value="1"/>
</dbReference>
<dbReference type="Pfam" id="PF00764">
    <property type="entry name" value="Arginosuc_synth"/>
    <property type="match status" value="1"/>
</dbReference>
<dbReference type="SUPFAM" id="SSF52402">
    <property type="entry name" value="Adenine nucleotide alpha hydrolases-like"/>
    <property type="match status" value="1"/>
</dbReference>
<dbReference type="SUPFAM" id="SSF69864">
    <property type="entry name" value="Argininosuccinate synthetase, C-terminal domain"/>
    <property type="match status" value="1"/>
</dbReference>
<dbReference type="PROSITE" id="PS00564">
    <property type="entry name" value="ARGININOSUCCIN_SYN_1"/>
    <property type="match status" value="1"/>
</dbReference>
<dbReference type="PROSITE" id="PS00565">
    <property type="entry name" value="ARGININOSUCCIN_SYN_2"/>
    <property type="match status" value="1"/>
</dbReference>
<gene>
    <name evidence="1" type="primary">argG</name>
    <name type="ordered locus">ECH_0680</name>
</gene>
<proteinExistence type="inferred from homology"/>
<feature type="chain" id="PRO_0000263924" description="Argininosuccinate synthase">
    <location>
        <begin position="1"/>
        <end position="393"/>
    </location>
</feature>
<feature type="binding site" evidence="1">
    <location>
        <begin position="7"/>
        <end position="15"/>
    </location>
    <ligand>
        <name>ATP</name>
        <dbReference type="ChEBI" id="CHEBI:30616"/>
    </ligand>
</feature>
<feature type="binding site" evidence="1">
    <location>
        <position position="34"/>
    </location>
    <ligand>
        <name>ATP</name>
        <dbReference type="ChEBI" id="CHEBI:30616"/>
    </ligand>
</feature>
<feature type="binding site" evidence="1">
    <location>
        <position position="85"/>
    </location>
    <ligand>
        <name>L-citrulline</name>
        <dbReference type="ChEBI" id="CHEBI:57743"/>
    </ligand>
</feature>
<feature type="binding site" evidence="1">
    <location>
        <position position="90"/>
    </location>
    <ligand>
        <name>L-citrulline</name>
        <dbReference type="ChEBI" id="CHEBI:57743"/>
    </ligand>
</feature>
<feature type="binding site" evidence="1">
    <location>
        <position position="115"/>
    </location>
    <ligand>
        <name>ATP</name>
        <dbReference type="ChEBI" id="CHEBI:30616"/>
    </ligand>
</feature>
<feature type="binding site" evidence="1">
    <location>
        <position position="117"/>
    </location>
    <ligand>
        <name>L-aspartate</name>
        <dbReference type="ChEBI" id="CHEBI:29991"/>
    </ligand>
</feature>
<feature type="binding site" evidence="1">
    <location>
        <position position="121"/>
    </location>
    <ligand>
        <name>L-aspartate</name>
        <dbReference type="ChEBI" id="CHEBI:29991"/>
    </ligand>
</feature>
<feature type="binding site" evidence="1">
    <location>
        <position position="121"/>
    </location>
    <ligand>
        <name>L-citrulline</name>
        <dbReference type="ChEBI" id="CHEBI:57743"/>
    </ligand>
</feature>
<feature type="binding site" evidence="1">
    <location>
        <position position="122"/>
    </location>
    <ligand>
        <name>L-aspartate</name>
        <dbReference type="ChEBI" id="CHEBI:29991"/>
    </ligand>
</feature>
<feature type="binding site" evidence="1">
    <location>
        <position position="125"/>
    </location>
    <ligand>
        <name>L-citrulline</name>
        <dbReference type="ChEBI" id="CHEBI:57743"/>
    </ligand>
</feature>
<feature type="binding site" evidence="1">
    <location>
        <position position="176"/>
    </location>
    <ligand>
        <name>L-citrulline</name>
        <dbReference type="ChEBI" id="CHEBI:57743"/>
    </ligand>
</feature>
<feature type="binding site" evidence="1">
    <location>
        <position position="185"/>
    </location>
    <ligand>
        <name>L-citrulline</name>
        <dbReference type="ChEBI" id="CHEBI:57743"/>
    </ligand>
</feature>
<feature type="binding site" evidence="1">
    <location>
        <position position="261"/>
    </location>
    <ligand>
        <name>L-citrulline</name>
        <dbReference type="ChEBI" id="CHEBI:57743"/>
    </ligand>
</feature>
<feature type="binding site" evidence="1">
    <location>
        <position position="273"/>
    </location>
    <ligand>
        <name>L-citrulline</name>
        <dbReference type="ChEBI" id="CHEBI:57743"/>
    </ligand>
</feature>
<comment type="catalytic activity">
    <reaction evidence="1">
        <text>L-citrulline + L-aspartate + ATP = 2-(N(omega)-L-arginino)succinate + AMP + diphosphate + H(+)</text>
        <dbReference type="Rhea" id="RHEA:10932"/>
        <dbReference type="ChEBI" id="CHEBI:15378"/>
        <dbReference type="ChEBI" id="CHEBI:29991"/>
        <dbReference type="ChEBI" id="CHEBI:30616"/>
        <dbReference type="ChEBI" id="CHEBI:33019"/>
        <dbReference type="ChEBI" id="CHEBI:57472"/>
        <dbReference type="ChEBI" id="CHEBI:57743"/>
        <dbReference type="ChEBI" id="CHEBI:456215"/>
        <dbReference type="EC" id="6.3.4.5"/>
    </reaction>
</comment>
<comment type="pathway">
    <text evidence="1">Amino-acid biosynthesis; L-arginine biosynthesis; L-arginine from L-ornithine and carbamoyl phosphate: step 2/3.</text>
</comment>
<comment type="subunit">
    <text evidence="1">Homotetramer.</text>
</comment>
<comment type="subcellular location">
    <subcellularLocation>
        <location evidence="1">Cytoplasm</location>
    </subcellularLocation>
</comment>
<comment type="similarity">
    <text evidence="1">Belongs to the argininosuccinate synthase family. Type 1 subfamily.</text>
</comment>
<accession>Q2GGE6</accession>
<sequence length="393" mass="44168">MKKIVLAYSGGLDTSVILKWLQENYNCEVVVFTADLGQNDDMSAIRQKAAASNVKEIFIEDLKEEFVKDFVFPMFRANTVYEGYYLLGTSIARPLIAKRQIEIAHLTGADAVAHGATGKGNDQIRFEFGYYSCDPNIKVIAPWRQWELTSRNSLIEYAKKHGIDVPLDKASEPPYSIDANLLHTSYEGKSLEDPYIEPDYTMLSKSVIPELASDTPEYIEISFKNGDPHAINNVPLSPANLLQQLNIIGGRHGIGIIDIVENRYIGIKSRGVYETPGGTILLHAHRAIESITLDREAAHLKDEIMPRYAKLIYNGYWWTTERKMLQALIDKSQDKVNGVVRLKLYKGSVMVVGRTSENSLYSHNLASFDSSGNYNHTDAEGFIKINSLRLRNS</sequence>
<reference key="1">
    <citation type="journal article" date="2006" name="PLoS Genet.">
        <title>Comparative genomics of emerging human ehrlichiosis agents.</title>
        <authorList>
            <person name="Dunning Hotopp J.C."/>
            <person name="Lin M."/>
            <person name="Madupu R."/>
            <person name="Crabtree J."/>
            <person name="Angiuoli S.V."/>
            <person name="Eisen J.A."/>
            <person name="Seshadri R."/>
            <person name="Ren Q."/>
            <person name="Wu M."/>
            <person name="Utterback T.R."/>
            <person name="Smith S."/>
            <person name="Lewis M."/>
            <person name="Khouri H."/>
            <person name="Zhang C."/>
            <person name="Niu H."/>
            <person name="Lin Q."/>
            <person name="Ohashi N."/>
            <person name="Zhi N."/>
            <person name="Nelson W.C."/>
            <person name="Brinkac L.M."/>
            <person name="Dodson R.J."/>
            <person name="Rosovitz M.J."/>
            <person name="Sundaram J.P."/>
            <person name="Daugherty S.C."/>
            <person name="Davidsen T."/>
            <person name="Durkin A.S."/>
            <person name="Gwinn M.L."/>
            <person name="Haft D.H."/>
            <person name="Selengut J.D."/>
            <person name="Sullivan S.A."/>
            <person name="Zafar N."/>
            <person name="Zhou L."/>
            <person name="Benahmed F."/>
            <person name="Forberger H."/>
            <person name="Halpin R."/>
            <person name="Mulligan S."/>
            <person name="Robinson J."/>
            <person name="White O."/>
            <person name="Rikihisa Y."/>
            <person name="Tettelin H."/>
        </authorList>
    </citation>
    <scope>NUCLEOTIDE SEQUENCE [LARGE SCALE GENOMIC DNA]</scope>
    <source>
        <strain>ATCC CRL-10679 / Arkansas</strain>
    </source>
</reference>
<name>ASSY_EHRCR</name>
<keyword id="KW-0028">Amino-acid biosynthesis</keyword>
<keyword id="KW-0055">Arginine biosynthesis</keyword>
<keyword id="KW-0067">ATP-binding</keyword>
<keyword id="KW-0963">Cytoplasm</keyword>
<keyword id="KW-0436">Ligase</keyword>
<keyword id="KW-0547">Nucleotide-binding</keyword>
<keyword id="KW-1185">Reference proteome</keyword>
<protein>
    <recommendedName>
        <fullName evidence="1">Argininosuccinate synthase</fullName>
        <ecNumber evidence="1">6.3.4.5</ecNumber>
    </recommendedName>
    <alternativeName>
        <fullName evidence="1">Citrulline--aspartate ligase</fullName>
    </alternativeName>
</protein>
<evidence type="ECO:0000255" key="1">
    <source>
        <dbReference type="HAMAP-Rule" id="MF_00005"/>
    </source>
</evidence>
<organism>
    <name type="scientific">Ehrlichia chaffeensis (strain ATCC CRL-10679 / Arkansas)</name>
    <dbReference type="NCBI Taxonomy" id="205920"/>
    <lineage>
        <taxon>Bacteria</taxon>
        <taxon>Pseudomonadati</taxon>
        <taxon>Pseudomonadota</taxon>
        <taxon>Alphaproteobacteria</taxon>
        <taxon>Rickettsiales</taxon>
        <taxon>Anaplasmataceae</taxon>
        <taxon>Ehrlichia</taxon>
    </lineage>
</organism>